<evidence type="ECO:0000255" key="1">
    <source>
        <dbReference type="HAMAP-Rule" id="MF_01636"/>
    </source>
</evidence>
<proteinExistence type="inferred from homology"/>
<organism>
    <name type="scientific">Ectopseudomonas mendocina (strain ymp)</name>
    <name type="common">Pseudomonas mendocina</name>
    <dbReference type="NCBI Taxonomy" id="399739"/>
    <lineage>
        <taxon>Bacteria</taxon>
        <taxon>Pseudomonadati</taxon>
        <taxon>Pseudomonadota</taxon>
        <taxon>Gammaproteobacteria</taxon>
        <taxon>Pseudomonadales</taxon>
        <taxon>Pseudomonadaceae</taxon>
        <taxon>Ectopseudomonas</taxon>
    </lineage>
</organism>
<protein>
    <recommendedName>
        <fullName evidence="1">3-octaprenyl-4-hydroxybenzoate carboxy-lyase</fullName>
        <ecNumber evidence="1">4.1.1.98</ecNumber>
    </recommendedName>
    <alternativeName>
        <fullName evidence="1">Polyprenyl p-hydroxybenzoate decarboxylase</fullName>
    </alternativeName>
</protein>
<comment type="function">
    <text evidence="1">Catalyzes the decarboxylation of 3-octaprenyl-4-hydroxy benzoate to 2-octaprenylphenol, an intermediate step in ubiquinone biosynthesis.</text>
</comment>
<comment type="catalytic activity">
    <reaction evidence="1">
        <text>a 4-hydroxy-3-(all-trans-polyprenyl)benzoate + H(+) = a 2-(all-trans-polyprenyl)phenol + CO2</text>
        <dbReference type="Rhea" id="RHEA:41680"/>
        <dbReference type="Rhea" id="RHEA-COMP:9514"/>
        <dbReference type="Rhea" id="RHEA-COMP:9516"/>
        <dbReference type="ChEBI" id="CHEBI:1269"/>
        <dbReference type="ChEBI" id="CHEBI:15378"/>
        <dbReference type="ChEBI" id="CHEBI:16526"/>
        <dbReference type="ChEBI" id="CHEBI:78396"/>
        <dbReference type="EC" id="4.1.1.98"/>
    </reaction>
</comment>
<comment type="cofactor">
    <cofactor evidence="1">
        <name>prenylated FMN</name>
        <dbReference type="ChEBI" id="CHEBI:87746"/>
    </cofactor>
    <text evidence="1">Binds 1 prenylated FMN per subunit.</text>
</comment>
<comment type="cofactor">
    <cofactor evidence="1">
        <name>Mn(2+)</name>
        <dbReference type="ChEBI" id="CHEBI:29035"/>
    </cofactor>
</comment>
<comment type="pathway">
    <text evidence="1">Cofactor biosynthesis; ubiquinone biosynthesis.</text>
</comment>
<comment type="subunit">
    <text evidence="1">Homohexamer.</text>
</comment>
<comment type="subcellular location">
    <subcellularLocation>
        <location evidence="1">Cell membrane</location>
        <topology evidence="1">Peripheral membrane protein</topology>
    </subcellularLocation>
</comment>
<comment type="similarity">
    <text evidence="1">Belongs to the UbiD family.</text>
</comment>
<gene>
    <name evidence="1" type="primary">ubiD</name>
    <name type="ordered locus">Pmen_0310</name>
</gene>
<reference key="1">
    <citation type="submission" date="2007-04" db="EMBL/GenBank/DDBJ databases">
        <title>Complete sequence of Pseudomonas mendocina ymp.</title>
        <authorList>
            <consortium name="US DOE Joint Genome Institute"/>
            <person name="Copeland A."/>
            <person name="Lucas S."/>
            <person name="Lapidus A."/>
            <person name="Barry K."/>
            <person name="Glavina del Rio T."/>
            <person name="Dalin E."/>
            <person name="Tice H."/>
            <person name="Pitluck S."/>
            <person name="Kiss H."/>
            <person name="Brettin T."/>
            <person name="Detter J.C."/>
            <person name="Bruce D."/>
            <person name="Han C."/>
            <person name="Schmutz J."/>
            <person name="Larimer F."/>
            <person name="Land M."/>
            <person name="Hauser L."/>
            <person name="Kyrpides N."/>
            <person name="Mikhailova N."/>
            <person name="Hersman L."/>
            <person name="Dubois J."/>
            <person name="Maurice P."/>
            <person name="Richardson P."/>
        </authorList>
    </citation>
    <scope>NUCLEOTIDE SEQUENCE [LARGE SCALE GENOMIC DNA]</scope>
    <source>
        <strain>ymp</strain>
    </source>
</reference>
<keyword id="KW-1003">Cell membrane</keyword>
<keyword id="KW-0210">Decarboxylase</keyword>
<keyword id="KW-0285">Flavoprotein</keyword>
<keyword id="KW-0288">FMN</keyword>
<keyword id="KW-0456">Lyase</keyword>
<keyword id="KW-0464">Manganese</keyword>
<keyword id="KW-0472">Membrane</keyword>
<keyword id="KW-0479">Metal-binding</keyword>
<keyword id="KW-0831">Ubiquinone biosynthesis</keyword>
<name>UBID_ECTM1</name>
<accession>A4XP18</accession>
<dbReference type="EC" id="4.1.1.98" evidence="1"/>
<dbReference type="EMBL" id="CP000680">
    <property type="protein sequence ID" value="ABP83084.1"/>
    <property type="molecule type" value="Genomic_DNA"/>
</dbReference>
<dbReference type="SMR" id="A4XP18"/>
<dbReference type="STRING" id="399739.Pmen_0310"/>
<dbReference type="KEGG" id="pmy:Pmen_0310"/>
<dbReference type="PATRIC" id="fig|399739.8.peg.317"/>
<dbReference type="eggNOG" id="COG0043">
    <property type="taxonomic scope" value="Bacteria"/>
</dbReference>
<dbReference type="HOGENOM" id="CLU_023348_4_1_6"/>
<dbReference type="OrthoDB" id="9809841at2"/>
<dbReference type="UniPathway" id="UPA00232"/>
<dbReference type="GO" id="GO:0005829">
    <property type="term" value="C:cytosol"/>
    <property type="evidence" value="ECO:0007669"/>
    <property type="project" value="TreeGrafter"/>
</dbReference>
<dbReference type="GO" id="GO:0005886">
    <property type="term" value="C:plasma membrane"/>
    <property type="evidence" value="ECO:0007669"/>
    <property type="project" value="UniProtKB-SubCell"/>
</dbReference>
<dbReference type="GO" id="GO:0008694">
    <property type="term" value="F:3-octaprenyl-4-hydroxybenzoate carboxy-lyase activity"/>
    <property type="evidence" value="ECO:0007669"/>
    <property type="project" value="UniProtKB-UniRule"/>
</dbReference>
<dbReference type="GO" id="GO:0046872">
    <property type="term" value="F:metal ion binding"/>
    <property type="evidence" value="ECO:0007669"/>
    <property type="project" value="UniProtKB-KW"/>
</dbReference>
<dbReference type="GO" id="GO:0006744">
    <property type="term" value="P:ubiquinone biosynthetic process"/>
    <property type="evidence" value="ECO:0007669"/>
    <property type="project" value="UniProtKB-UniRule"/>
</dbReference>
<dbReference type="FunFam" id="1.20.5.570:FF:000001">
    <property type="entry name" value="3-octaprenyl-4-hydroxybenzoate carboxy-lyase"/>
    <property type="match status" value="1"/>
</dbReference>
<dbReference type="FunFam" id="3.40.1670.10:FF:000001">
    <property type="entry name" value="3-octaprenyl-4-hydroxybenzoate carboxy-lyase"/>
    <property type="match status" value="1"/>
</dbReference>
<dbReference type="Gene3D" id="1.20.5.570">
    <property type="entry name" value="Single helix bin"/>
    <property type="match status" value="1"/>
</dbReference>
<dbReference type="Gene3D" id="3.40.1670.10">
    <property type="entry name" value="UbiD C-terminal domain-like"/>
    <property type="match status" value="1"/>
</dbReference>
<dbReference type="HAMAP" id="MF_01636">
    <property type="entry name" value="UbiD"/>
    <property type="match status" value="1"/>
</dbReference>
<dbReference type="InterPro" id="IPR002830">
    <property type="entry name" value="UbiD"/>
</dbReference>
<dbReference type="InterPro" id="IPR049381">
    <property type="entry name" value="UbiD-like_C"/>
</dbReference>
<dbReference type="InterPro" id="IPR049383">
    <property type="entry name" value="UbiD-like_N"/>
</dbReference>
<dbReference type="InterPro" id="IPR023677">
    <property type="entry name" value="UbiD_bacteria"/>
</dbReference>
<dbReference type="InterPro" id="IPR048304">
    <property type="entry name" value="UbiD_Rift_dom"/>
</dbReference>
<dbReference type="NCBIfam" id="NF008175">
    <property type="entry name" value="PRK10922.1"/>
    <property type="match status" value="1"/>
</dbReference>
<dbReference type="NCBIfam" id="TIGR00148">
    <property type="entry name" value="UbiD family decarboxylase"/>
    <property type="match status" value="1"/>
</dbReference>
<dbReference type="PANTHER" id="PTHR30108">
    <property type="entry name" value="3-OCTAPRENYL-4-HYDROXYBENZOATE CARBOXY-LYASE-RELATED"/>
    <property type="match status" value="1"/>
</dbReference>
<dbReference type="PANTHER" id="PTHR30108:SF17">
    <property type="entry name" value="FERULIC ACID DECARBOXYLASE 1"/>
    <property type="match status" value="1"/>
</dbReference>
<dbReference type="Pfam" id="PF01977">
    <property type="entry name" value="UbiD"/>
    <property type="match status" value="1"/>
</dbReference>
<dbReference type="Pfam" id="PF20696">
    <property type="entry name" value="UbiD_C"/>
    <property type="match status" value="1"/>
</dbReference>
<dbReference type="Pfam" id="PF20695">
    <property type="entry name" value="UbiD_N"/>
    <property type="match status" value="1"/>
</dbReference>
<dbReference type="SUPFAM" id="SSF50475">
    <property type="entry name" value="FMN-binding split barrel"/>
    <property type="match status" value="1"/>
</dbReference>
<dbReference type="SUPFAM" id="SSF143968">
    <property type="entry name" value="UbiD C-terminal domain-like"/>
    <property type="match status" value="1"/>
</dbReference>
<feature type="chain" id="PRO_1000069855" description="3-octaprenyl-4-hydroxybenzoate carboxy-lyase">
    <location>
        <begin position="1"/>
        <end position="488"/>
    </location>
</feature>
<feature type="active site" description="Proton donor" evidence="1">
    <location>
        <position position="287"/>
    </location>
</feature>
<feature type="binding site" evidence="1">
    <location>
        <position position="172"/>
    </location>
    <ligand>
        <name>Mn(2+)</name>
        <dbReference type="ChEBI" id="CHEBI:29035"/>
    </ligand>
</feature>
<feature type="binding site" evidence="1">
    <location>
        <begin position="175"/>
        <end position="177"/>
    </location>
    <ligand>
        <name>prenylated FMN</name>
        <dbReference type="ChEBI" id="CHEBI:87746"/>
    </ligand>
</feature>
<feature type="binding site" evidence="1">
    <location>
        <begin position="189"/>
        <end position="191"/>
    </location>
    <ligand>
        <name>prenylated FMN</name>
        <dbReference type="ChEBI" id="CHEBI:87746"/>
    </ligand>
</feature>
<feature type="binding site" evidence="1">
    <location>
        <begin position="194"/>
        <end position="195"/>
    </location>
    <ligand>
        <name>prenylated FMN</name>
        <dbReference type="ChEBI" id="CHEBI:87746"/>
    </ligand>
</feature>
<feature type="binding site" evidence="1">
    <location>
        <position position="238"/>
    </location>
    <ligand>
        <name>Mn(2+)</name>
        <dbReference type="ChEBI" id="CHEBI:29035"/>
    </ligand>
</feature>
<sequence length="488" mass="54871">MQYRDLRDFIRELEKRGELKRIQTPVSPILEMTEICDRTLRKGGPALLFEKPTGFDVPVLGNLFGTPKRVALGMGAEDVAELREIGKLLAFLKEPEPPKGLKDAWSKLPIFKKVISMAPKVVKDAPCHEVIEEGEDVDLNRLPIQHCWPGDVAPLITWGLTITKGPNKERQNLGIYRQQVIGRNKVIMRWLSHRGGALDYREWCQKYPDKPYPVCVALGADPATILGAVTPVPDTLSEYAFAGLLRGHRTELIKAVGSDLQVPASAEIVLEGVIHPGETAPEGPYGDHTGYYNEVDTFPVFTVERITRRREPIYHSTYTGRPPDEPAILGVALNEVFVPILQKQFPEITDFYLPPEGCSYRMAVVTMKKQYPGHAKRVMLGVWSFLRQFMYTKFVIVTDDDINARDWNDVIWAITTRMDPKRDTVMIDNTPIDYLDFASPISGLGSKMGLDATHKWPGETSREWGRAIEKDPAVVARVDALWGELGID</sequence>